<name>XKDW_BACSU</name>
<accession>P54342</accession>
<proteinExistence type="evidence at protein level"/>
<dbReference type="EMBL" id="Z70177">
    <property type="protein sequence ID" value="CAA94044.1"/>
    <property type="molecule type" value="Genomic_DNA"/>
</dbReference>
<dbReference type="EMBL" id="AL009126">
    <property type="protein sequence ID" value="CAB13133.1"/>
    <property type="molecule type" value="Genomic_DNA"/>
</dbReference>
<dbReference type="PIR" id="F69733">
    <property type="entry name" value="F69733"/>
</dbReference>
<dbReference type="RefSeq" id="NP_389159.1">
    <property type="nucleotide sequence ID" value="NC_000964.3"/>
</dbReference>
<dbReference type="RefSeq" id="WP_003232660.1">
    <property type="nucleotide sequence ID" value="NZ_OZ025638.1"/>
</dbReference>
<dbReference type="PDB" id="2HG7">
    <property type="method" value="NMR"/>
    <property type="chains" value="A=1-102"/>
</dbReference>
<dbReference type="PDBsum" id="2HG7"/>
<dbReference type="SMR" id="P54342"/>
<dbReference type="FunCoup" id="P54342">
    <property type="interactions" value="46"/>
</dbReference>
<dbReference type="STRING" id="224308.BSU12760"/>
<dbReference type="PaxDb" id="224308-BSU12760"/>
<dbReference type="EnsemblBacteria" id="CAB13133">
    <property type="protein sequence ID" value="CAB13133"/>
    <property type="gene ID" value="BSU_12760"/>
</dbReference>
<dbReference type="GeneID" id="936237"/>
<dbReference type="KEGG" id="bsu:BSU12760"/>
<dbReference type="PATRIC" id="fig|224308.179.peg.1384"/>
<dbReference type="eggNOG" id="ENOG5032KD7">
    <property type="taxonomic scope" value="Bacteria"/>
</dbReference>
<dbReference type="InParanoid" id="P54342"/>
<dbReference type="OrthoDB" id="2918946at2"/>
<dbReference type="BioCyc" id="BSUB:BSU12760-MONOMER"/>
<dbReference type="EvolutionaryTrace" id="P54342"/>
<dbReference type="Proteomes" id="UP000001570">
    <property type="component" value="Chromosome"/>
</dbReference>
<dbReference type="Gene3D" id="3.30.56.60">
    <property type="entry name" value="XkdW-like"/>
    <property type="match status" value="1"/>
</dbReference>
<dbReference type="InterPro" id="IPR019094">
    <property type="entry name" value="Phage_SP-beta_YorD"/>
</dbReference>
<dbReference type="InterPro" id="IPR035950">
    <property type="entry name" value="XkdW-like_sf"/>
</dbReference>
<dbReference type="Pfam" id="PF09636">
    <property type="entry name" value="XkdW"/>
    <property type="match status" value="1"/>
</dbReference>
<dbReference type="SUPFAM" id="SSF159865">
    <property type="entry name" value="XkdW-like"/>
    <property type="match status" value="1"/>
</dbReference>
<feature type="chain" id="PRO_0000066035" description="Phage-like element PBSX protein XkdW">
    <location>
        <begin position="1"/>
        <end position="109"/>
    </location>
</feature>
<feature type="helix" evidence="2">
    <location>
        <begin position="3"/>
        <end position="10"/>
    </location>
</feature>
<feature type="turn" evidence="2">
    <location>
        <begin position="17"/>
        <end position="19"/>
    </location>
</feature>
<feature type="strand" evidence="2">
    <location>
        <begin position="20"/>
        <end position="24"/>
    </location>
</feature>
<feature type="strand" evidence="2">
    <location>
        <begin position="29"/>
        <end position="34"/>
    </location>
</feature>
<feature type="strand" evidence="2">
    <location>
        <begin position="36"/>
        <end position="38"/>
    </location>
</feature>
<feature type="helix" evidence="2">
    <location>
        <begin position="43"/>
        <end position="55"/>
    </location>
</feature>
<sequence length="109" mass="12728">MILYDAIMYKYPNAVSRKDFELRNDGNGSYIEKWNLRAPLPTQAELETWWEELQKNPPYEPPDQVELLAQELSQEKLARKQLEELNKTLGNELSDIKLSLLSLKGDYAE</sequence>
<evidence type="ECO:0000305" key="1"/>
<evidence type="ECO:0007829" key="2">
    <source>
        <dbReference type="PDB" id="2HG7"/>
    </source>
</evidence>
<reference key="1">
    <citation type="submission" date="1996-03" db="EMBL/GenBank/DDBJ databases">
        <authorList>
            <person name="Krogh S."/>
            <person name="O'Reilly M."/>
            <person name="Nolan N."/>
            <person name="Devine K.M."/>
        </authorList>
    </citation>
    <scope>NUCLEOTIDE SEQUENCE [GENOMIC DNA]</scope>
    <source>
        <strain>168</strain>
    </source>
</reference>
<reference key="2">
    <citation type="journal article" date="1997" name="Nature">
        <title>The complete genome sequence of the Gram-positive bacterium Bacillus subtilis.</title>
        <authorList>
            <person name="Kunst F."/>
            <person name="Ogasawara N."/>
            <person name="Moszer I."/>
            <person name="Albertini A.M."/>
            <person name="Alloni G."/>
            <person name="Azevedo V."/>
            <person name="Bertero M.G."/>
            <person name="Bessieres P."/>
            <person name="Bolotin A."/>
            <person name="Borchert S."/>
            <person name="Borriss R."/>
            <person name="Boursier L."/>
            <person name="Brans A."/>
            <person name="Braun M."/>
            <person name="Brignell S.C."/>
            <person name="Bron S."/>
            <person name="Brouillet S."/>
            <person name="Bruschi C.V."/>
            <person name="Caldwell B."/>
            <person name="Capuano V."/>
            <person name="Carter N.M."/>
            <person name="Choi S.-K."/>
            <person name="Codani J.-J."/>
            <person name="Connerton I.F."/>
            <person name="Cummings N.J."/>
            <person name="Daniel R.A."/>
            <person name="Denizot F."/>
            <person name="Devine K.M."/>
            <person name="Duesterhoeft A."/>
            <person name="Ehrlich S.D."/>
            <person name="Emmerson P.T."/>
            <person name="Entian K.-D."/>
            <person name="Errington J."/>
            <person name="Fabret C."/>
            <person name="Ferrari E."/>
            <person name="Foulger D."/>
            <person name="Fritz C."/>
            <person name="Fujita M."/>
            <person name="Fujita Y."/>
            <person name="Fuma S."/>
            <person name="Galizzi A."/>
            <person name="Galleron N."/>
            <person name="Ghim S.-Y."/>
            <person name="Glaser P."/>
            <person name="Goffeau A."/>
            <person name="Golightly E.J."/>
            <person name="Grandi G."/>
            <person name="Guiseppi G."/>
            <person name="Guy B.J."/>
            <person name="Haga K."/>
            <person name="Haiech J."/>
            <person name="Harwood C.R."/>
            <person name="Henaut A."/>
            <person name="Hilbert H."/>
            <person name="Holsappel S."/>
            <person name="Hosono S."/>
            <person name="Hullo M.-F."/>
            <person name="Itaya M."/>
            <person name="Jones L.-M."/>
            <person name="Joris B."/>
            <person name="Karamata D."/>
            <person name="Kasahara Y."/>
            <person name="Klaerr-Blanchard M."/>
            <person name="Klein C."/>
            <person name="Kobayashi Y."/>
            <person name="Koetter P."/>
            <person name="Koningstein G."/>
            <person name="Krogh S."/>
            <person name="Kumano M."/>
            <person name="Kurita K."/>
            <person name="Lapidus A."/>
            <person name="Lardinois S."/>
            <person name="Lauber J."/>
            <person name="Lazarevic V."/>
            <person name="Lee S.-M."/>
            <person name="Levine A."/>
            <person name="Liu H."/>
            <person name="Masuda S."/>
            <person name="Mauel C."/>
            <person name="Medigue C."/>
            <person name="Medina N."/>
            <person name="Mellado R.P."/>
            <person name="Mizuno M."/>
            <person name="Moestl D."/>
            <person name="Nakai S."/>
            <person name="Noback M."/>
            <person name="Noone D."/>
            <person name="O'Reilly M."/>
            <person name="Ogawa K."/>
            <person name="Ogiwara A."/>
            <person name="Oudega B."/>
            <person name="Park S.-H."/>
            <person name="Parro V."/>
            <person name="Pohl T.M."/>
            <person name="Portetelle D."/>
            <person name="Porwollik S."/>
            <person name="Prescott A.M."/>
            <person name="Presecan E."/>
            <person name="Pujic P."/>
            <person name="Purnelle B."/>
            <person name="Rapoport G."/>
            <person name="Rey M."/>
            <person name="Reynolds S."/>
            <person name="Rieger M."/>
            <person name="Rivolta C."/>
            <person name="Rocha E."/>
            <person name="Roche B."/>
            <person name="Rose M."/>
            <person name="Sadaie Y."/>
            <person name="Sato T."/>
            <person name="Scanlan E."/>
            <person name="Schleich S."/>
            <person name="Schroeter R."/>
            <person name="Scoffone F."/>
            <person name="Sekiguchi J."/>
            <person name="Sekowska A."/>
            <person name="Seror S.J."/>
            <person name="Serror P."/>
            <person name="Shin B.-S."/>
            <person name="Soldo B."/>
            <person name="Sorokin A."/>
            <person name="Tacconi E."/>
            <person name="Takagi T."/>
            <person name="Takahashi H."/>
            <person name="Takemaru K."/>
            <person name="Takeuchi M."/>
            <person name="Tamakoshi A."/>
            <person name="Tanaka T."/>
            <person name="Terpstra P."/>
            <person name="Tognoni A."/>
            <person name="Tosato V."/>
            <person name="Uchiyama S."/>
            <person name="Vandenbol M."/>
            <person name="Vannier F."/>
            <person name="Vassarotti A."/>
            <person name="Viari A."/>
            <person name="Wambutt R."/>
            <person name="Wedler E."/>
            <person name="Wedler H."/>
            <person name="Weitzenegger T."/>
            <person name="Winters P."/>
            <person name="Wipat A."/>
            <person name="Yamamoto H."/>
            <person name="Yamane K."/>
            <person name="Yasumoto K."/>
            <person name="Yata K."/>
            <person name="Yoshida K."/>
            <person name="Yoshikawa H.-F."/>
            <person name="Zumstein E."/>
            <person name="Yoshikawa H."/>
            <person name="Danchin A."/>
        </authorList>
    </citation>
    <scope>NUCLEOTIDE SEQUENCE [LARGE SCALE GENOMIC DNA]</scope>
    <source>
        <strain>168</strain>
    </source>
</reference>
<comment type="similarity">
    <text evidence="1">To B.subtilis YqcC.</text>
</comment>
<organism>
    <name type="scientific">Bacillus subtilis (strain 168)</name>
    <dbReference type="NCBI Taxonomy" id="224308"/>
    <lineage>
        <taxon>Bacteria</taxon>
        <taxon>Bacillati</taxon>
        <taxon>Bacillota</taxon>
        <taxon>Bacilli</taxon>
        <taxon>Bacillales</taxon>
        <taxon>Bacillaceae</taxon>
        <taxon>Bacillus</taxon>
    </lineage>
</organism>
<keyword id="KW-0002">3D-structure</keyword>
<keyword id="KW-1185">Reference proteome</keyword>
<gene>
    <name type="primary">xkdW</name>
    <name type="ordered locus">BSU12760</name>
</gene>
<protein>
    <recommendedName>
        <fullName>Phage-like element PBSX protein XkdW</fullName>
    </recommendedName>
</protein>